<evidence type="ECO:0000255" key="1">
    <source>
        <dbReference type="HAMAP-Rule" id="MF_00381"/>
    </source>
</evidence>
<gene>
    <name evidence="1" type="primary">ihfB</name>
    <name evidence="1" type="synonym">himD</name>
    <name type="ordered locus">BMEA_A0159</name>
</gene>
<organism>
    <name type="scientific">Brucella melitensis biotype 2 (strain ATCC 23457)</name>
    <dbReference type="NCBI Taxonomy" id="546272"/>
    <lineage>
        <taxon>Bacteria</taxon>
        <taxon>Pseudomonadati</taxon>
        <taxon>Pseudomonadota</taxon>
        <taxon>Alphaproteobacteria</taxon>
        <taxon>Hyphomicrobiales</taxon>
        <taxon>Brucellaceae</taxon>
        <taxon>Brucella/Ochrobactrum group</taxon>
        <taxon>Brucella</taxon>
    </lineage>
</organism>
<feature type="chain" id="PRO_1000190436" description="Integration host factor subunit beta">
    <location>
        <begin position="1"/>
        <end position="94"/>
    </location>
</feature>
<proteinExistence type="inferred from homology"/>
<accession>C0RGK7</accession>
<reference key="1">
    <citation type="submission" date="2009-03" db="EMBL/GenBank/DDBJ databases">
        <title>Brucella melitensis ATCC 23457 whole genome shotgun sequencing project.</title>
        <authorList>
            <person name="Setubal J.C."/>
            <person name="Boyle S."/>
            <person name="Crasta O.R."/>
            <person name="Gillespie J.J."/>
            <person name="Kenyon R.W."/>
            <person name="Lu J."/>
            <person name="Mane S."/>
            <person name="Nagrani S."/>
            <person name="Shallom J.M."/>
            <person name="Shallom S."/>
            <person name="Shukla M."/>
            <person name="Snyder E.E."/>
            <person name="Sobral B.W."/>
            <person name="Wattam A.R."/>
            <person name="Will R."/>
            <person name="Williams K."/>
            <person name="Yoo H."/>
            <person name="Munk C."/>
            <person name="Tapia R."/>
            <person name="Han C."/>
            <person name="Detter J.C."/>
            <person name="Bruce D."/>
            <person name="Brettin T.S."/>
        </authorList>
    </citation>
    <scope>NUCLEOTIDE SEQUENCE [LARGE SCALE GENOMIC DNA]</scope>
    <source>
        <strain>ATCC 23457</strain>
    </source>
</reference>
<comment type="function">
    <text evidence="1">This protein is one of the two subunits of integration host factor, a specific DNA-binding protein that functions in genetic recombination as well as in transcriptional and translational control.</text>
</comment>
<comment type="subunit">
    <text evidence="1">Heterodimer of an alpha and a beta chain.</text>
</comment>
<comment type="similarity">
    <text evidence="1">Belongs to the bacterial histone-like protein family.</text>
</comment>
<name>IHFB_BRUMB</name>
<keyword id="KW-0233">DNA recombination</keyword>
<keyword id="KW-0238">DNA-binding</keyword>
<keyword id="KW-0804">Transcription</keyword>
<keyword id="KW-0805">Transcription regulation</keyword>
<keyword id="KW-0810">Translation regulation</keyword>
<protein>
    <recommendedName>
        <fullName evidence="1">Integration host factor subunit beta</fullName>
        <shortName evidence="1">IHF-beta</shortName>
    </recommendedName>
</protein>
<sequence>MIKSELVQIIASRNPHLFQRDVVNIVGAVFDEITNALAEGNRVELRGFGAFSVKNRPARSGRNPRTGETVDVEEKWVPFFKTGKKLRDRLNGAV</sequence>
<dbReference type="EMBL" id="CP001488">
    <property type="protein sequence ID" value="ACN99964.1"/>
    <property type="molecule type" value="Genomic_DNA"/>
</dbReference>
<dbReference type="RefSeq" id="WP_004684679.1">
    <property type="nucleotide sequence ID" value="NC_012441.1"/>
</dbReference>
<dbReference type="SMR" id="C0RGK7"/>
<dbReference type="KEGG" id="bmi:BMEA_A0159"/>
<dbReference type="HOGENOM" id="CLU_105066_2_0_5"/>
<dbReference type="Proteomes" id="UP000001748">
    <property type="component" value="Chromosome I"/>
</dbReference>
<dbReference type="GO" id="GO:0005694">
    <property type="term" value="C:chromosome"/>
    <property type="evidence" value="ECO:0007669"/>
    <property type="project" value="InterPro"/>
</dbReference>
<dbReference type="GO" id="GO:0005829">
    <property type="term" value="C:cytosol"/>
    <property type="evidence" value="ECO:0007669"/>
    <property type="project" value="TreeGrafter"/>
</dbReference>
<dbReference type="GO" id="GO:0003677">
    <property type="term" value="F:DNA binding"/>
    <property type="evidence" value="ECO:0007669"/>
    <property type="project" value="UniProtKB-UniRule"/>
</dbReference>
<dbReference type="GO" id="GO:0030527">
    <property type="term" value="F:structural constituent of chromatin"/>
    <property type="evidence" value="ECO:0007669"/>
    <property type="project" value="InterPro"/>
</dbReference>
<dbReference type="GO" id="GO:0006310">
    <property type="term" value="P:DNA recombination"/>
    <property type="evidence" value="ECO:0007669"/>
    <property type="project" value="UniProtKB-UniRule"/>
</dbReference>
<dbReference type="GO" id="GO:0006355">
    <property type="term" value="P:regulation of DNA-templated transcription"/>
    <property type="evidence" value="ECO:0007669"/>
    <property type="project" value="UniProtKB-UniRule"/>
</dbReference>
<dbReference type="GO" id="GO:0006417">
    <property type="term" value="P:regulation of translation"/>
    <property type="evidence" value="ECO:0007669"/>
    <property type="project" value="UniProtKB-UniRule"/>
</dbReference>
<dbReference type="CDD" id="cd13836">
    <property type="entry name" value="IHF_B"/>
    <property type="match status" value="1"/>
</dbReference>
<dbReference type="Gene3D" id="4.10.520.10">
    <property type="entry name" value="IHF-like DNA-binding proteins"/>
    <property type="match status" value="1"/>
</dbReference>
<dbReference type="HAMAP" id="MF_00381">
    <property type="entry name" value="IHF_beta"/>
    <property type="match status" value="1"/>
</dbReference>
<dbReference type="InterPro" id="IPR000119">
    <property type="entry name" value="Hist_DNA-bd"/>
</dbReference>
<dbReference type="InterPro" id="IPR020816">
    <property type="entry name" value="Histone-like_DNA-bd_CS"/>
</dbReference>
<dbReference type="InterPro" id="IPR010992">
    <property type="entry name" value="IHF-like_DNA-bd_dom_sf"/>
</dbReference>
<dbReference type="InterPro" id="IPR005685">
    <property type="entry name" value="IHF_beta"/>
</dbReference>
<dbReference type="NCBIfam" id="TIGR00988">
    <property type="entry name" value="hip"/>
    <property type="match status" value="1"/>
</dbReference>
<dbReference type="NCBIfam" id="NF001222">
    <property type="entry name" value="PRK00199.1"/>
    <property type="match status" value="1"/>
</dbReference>
<dbReference type="PANTHER" id="PTHR33175">
    <property type="entry name" value="DNA-BINDING PROTEIN HU"/>
    <property type="match status" value="1"/>
</dbReference>
<dbReference type="PANTHER" id="PTHR33175:SF5">
    <property type="entry name" value="INTEGRATION HOST FACTOR SUBUNIT BETA"/>
    <property type="match status" value="1"/>
</dbReference>
<dbReference type="Pfam" id="PF00216">
    <property type="entry name" value="Bac_DNA_binding"/>
    <property type="match status" value="1"/>
</dbReference>
<dbReference type="PRINTS" id="PR01727">
    <property type="entry name" value="DNABINDINGHU"/>
</dbReference>
<dbReference type="SMART" id="SM00411">
    <property type="entry name" value="BHL"/>
    <property type="match status" value="1"/>
</dbReference>
<dbReference type="SUPFAM" id="SSF47729">
    <property type="entry name" value="IHF-like DNA-binding proteins"/>
    <property type="match status" value="1"/>
</dbReference>
<dbReference type="PROSITE" id="PS00045">
    <property type="entry name" value="HISTONE_LIKE"/>
    <property type="match status" value="1"/>
</dbReference>